<accession>Q9EY50</accession>
<dbReference type="EC" id="2.3.2.10" evidence="1 6"/>
<dbReference type="EMBL" id="AY008262">
    <property type="protein sequence ID" value="AAG21689.1"/>
    <property type="molecule type" value="Genomic_DNA"/>
</dbReference>
<dbReference type="RefSeq" id="WP_057745451.1">
    <property type="nucleotide sequence ID" value="NZ_BJLU01000002.1"/>
</dbReference>
<dbReference type="PDB" id="1NE9">
    <property type="method" value="X-ray"/>
    <property type="resolution" value="1.70 A"/>
    <property type="chains" value="A=2-336"/>
</dbReference>
<dbReference type="PDB" id="1P4N">
    <property type="method" value="X-ray"/>
    <property type="resolution" value="1.90 A"/>
    <property type="chains" value="A=2-336"/>
</dbReference>
<dbReference type="PDB" id="1XE4">
    <property type="method" value="X-ray"/>
    <property type="resolution" value="1.95 A"/>
    <property type="chains" value="A=2-336"/>
</dbReference>
<dbReference type="PDB" id="1XF8">
    <property type="method" value="X-ray"/>
    <property type="resolution" value="1.90 A"/>
    <property type="chains" value="A=2-336"/>
</dbReference>
<dbReference type="PDB" id="1XIX">
    <property type="method" value="X-ray"/>
    <property type="resolution" value="2.00 A"/>
    <property type="chains" value="A=2-336"/>
</dbReference>
<dbReference type="PDB" id="3GKR">
    <property type="method" value="X-ray"/>
    <property type="resolution" value="1.60 A"/>
    <property type="chains" value="A=1-336"/>
</dbReference>
<dbReference type="PDB" id="4II9">
    <property type="method" value="X-ray"/>
    <property type="resolution" value="1.66 A"/>
    <property type="chains" value="A=1-336"/>
</dbReference>
<dbReference type="PDB" id="7Z5Y">
    <property type="method" value="X-ray"/>
    <property type="resolution" value="1.71 A"/>
    <property type="chains" value="A=1-336"/>
</dbReference>
<dbReference type="PDB" id="7Z5Z">
    <property type="method" value="X-ray"/>
    <property type="resolution" value="1.49 A"/>
    <property type="chains" value="A=1-336"/>
</dbReference>
<dbReference type="PDB" id="7Z6A">
    <property type="method" value="X-ray"/>
    <property type="resolution" value="1.66 A"/>
    <property type="chains" value="A=1-336"/>
</dbReference>
<dbReference type="PDB" id="7Z6K">
    <property type="method" value="X-ray"/>
    <property type="resolution" value="1.60 A"/>
    <property type="chains" value="A=1-336"/>
</dbReference>
<dbReference type="PDBsum" id="1NE9"/>
<dbReference type="PDBsum" id="1P4N"/>
<dbReference type="PDBsum" id="1XE4"/>
<dbReference type="PDBsum" id="1XF8"/>
<dbReference type="PDBsum" id="1XIX"/>
<dbReference type="PDBsum" id="3GKR"/>
<dbReference type="PDBsum" id="4II9"/>
<dbReference type="PDBsum" id="7Z5Y"/>
<dbReference type="PDBsum" id="7Z5Z"/>
<dbReference type="PDBsum" id="7Z6A"/>
<dbReference type="PDBsum" id="7Z6K"/>
<dbReference type="SMR" id="Q9EY50"/>
<dbReference type="STRING" id="1629.IV50_GL000816"/>
<dbReference type="KEGG" id="ag:AAG21689"/>
<dbReference type="OrthoDB" id="9785911at2"/>
<dbReference type="BioCyc" id="MetaCyc:MONOMER-15493"/>
<dbReference type="BRENDA" id="2.3.2.10">
    <property type="organism ID" value="2901"/>
</dbReference>
<dbReference type="BRENDA" id="2.3.2.16">
    <property type="organism ID" value="2901"/>
</dbReference>
<dbReference type="SABIO-RK" id="Q9EY50"/>
<dbReference type="EvolutionaryTrace" id="Q9EY50"/>
<dbReference type="GO" id="GO:0047206">
    <property type="term" value="F:UDP-N-acetylmuramoylpentapeptide-lysine N6-alanyltransferase activity"/>
    <property type="evidence" value="ECO:0000314"/>
    <property type="project" value="UniProtKB"/>
</dbReference>
<dbReference type="GO" id="GO:0071555">
    <property type="term" value="P:cell wall organization"/>
    <property type="evidence" value="ECO:0007669"/>
    <property type="project" value="UniProtKB-KW"/>
</dbReference>
<dbReference type="GO" id="GO:0009252">
    <property type="term" value="P:peptidoglycan biosynthetic process"/>
    <property type="evidence" value="ECO:0000314"/>
    <property type="project" value="UniProtKB"/>
</dbReference>
<dbReference type="GO" id="GO:0008360">
    <property type="term" value="P:regulation of cell shape"/>
    <property type="evidence" value="ECO:0007669"/>
    <property type="project" value="UniProtKB-KW"/>
</dbReference>
<dbReference type="Gene3D" id="3.40.630.30">
    <property type="match status" value="2"/>
</dbReference>
<dbReference type="InterPro" id="IPR016181">
    <property type="entry name" value="Acyl_CoA_acyltransferase"/>
</dbReference>
<dbReference type="InterPro" id="IPR003447">
    <property type="entry name" value="FEMABX"/>
</dbReference>
<dbReference type="InterPro" id="IPR050644">
    <property type="entry name" value="PG_Glycine_Bridge_Synth"/>
</dbReference>
<dbReference type="PANTHER" id="PTHR36174">
    <property type="entry name" value="LIPID II:GLYCINE GLYCYLTRANSFERASE"/>
    <property type="match status" value="1"/>
</dbReference>
<dbReference type="PANTHER" id="PTHR36174:SF1">
    <property type="entry name" value="LIPID II:GLYCINE GLYCYLTRANSFERASE"/>
    <property type="match status" value="1"/>
</dbReference>
<dbReference type="Pfam" id="PF02388">
    <property type="entry name" value="FemAB"/>
    <property type="match status" value="2"/>
</dbReference>
<dbReference type="SUPFAM" id="SSF55729">
    <property type="entry name" value="Acyl-CoA N-acyltransferases (Nat)"/>
    <property type="match status" value="2"/>
</dbReference>
<dbReference type="PROSITE" id="PS51191">
    <property type="entry name" value="FEMABX"/>
    <property type="match status" value="1"/>
</dbReference>
<protein>
    <recommendedName>
        <fullName>UDP-N-acetylmuramoylpentapeptide-lysine N(6)-alanyltransferase</fullName>
        <ecNumber evidence="1 6">2.3.2.10</ecNumber>
    </recommendedName>
</protein>
<organism evidence="10">
    <name type="scientific">Weissella viridescens</name>
    <name type="common">Lactobacillus viridescens</name>
    <dbReference type="NCBI Taxonomy" id="1629"/>
    <lineage>
        <taxon>Bacteria</taxon>
        <taxon>Bacillati</taxon>
        <taxon>Bacillota</taxon>
        <taxon>Bacilli</taxon>
        <taxon>Lactobacillales</taxon>
        <taxon>Lactobacillaceae</taxon>
        <taxon>Weissella</taxon>
    </lineage>
</organism>
<keyword id="KW-0002">3D-structure</keyword>
<keyword id="KW-0012">Acyltransferase</keyword>
<keyword id="KW-0133">Cell shape</keyword>
<keyword id="KW-0961">Cell wall biogenesis/degradation</keyword>
<keyword id="KW-0903">Direct protein sequencing</keyword>
<keyword id="KW-0573">Peptidoglycan synthesis</keyword>
<keyword id="KW-0808">Transferase</keyword>
<proteinExistence type="evidence at protein level"/>
<sequence>MPVLNLNDPQAVERYEEFMRQSPYGQVTQDLGWAKVKNNWEPVDVYLEDDQGAIIAAMSMLLGDTPTDKKFAYASKGPVMDVTDVDLLDRLVDEAVKALDGRAYVLRFDPEVAYSDEFNTTLQDHGYVTRNRNVADAGMHATIQPRLNMVLDLTKFPDAKTTLDLYPSKTKSKIKRPFRDGVEVHSGNSATELDEFFKTYTTMAERHGITHRPIEYFQRMQAAFDADTMRIFVAEREGKLLSTGIALKYGRKIWYMYAGSMDGNTYYAPYAVQSEMIQWALDTNTDLYDLGGIESESTDDSLYVFKHVFVKDAPREYIGEIDKVLDPEVYAELVKD</sequence>
<reference key="1">
    <citation type="journal article" date="2001" name="J. Biol. Chem.">
        <title>FemABX family members are novel nonribosomal peptidyltransferases and important pathogen-specific drug targets.</title>
        <authorList>
            <person name="Hegde S.S."/>
            <person name="Shrader T.E."/>
        </authorList>
    </citation>
    <scope>NUCLEOTIDE SEQUENCE [GENOMIC DNA]</scope>
    <scope>PROTEIN SEQUENCE OF 2-24; 161-169 AND 316-333</scope>
    <scope>FUNCTION</scope>
    <scope>CATALYTIC ACTIVITY</scope>
    <scope>MUTAGENESIS OF GLN-29; TYR-73; PRO-110; GLN-144; PHE-196; TYR-216; GLY-292; PHE-305; LYS-306 AND GLY-319</scope>
</reference>
<reference key="2">
    <citation type="journal article" date="1970" name="J. Biol. Chem.">
        <title>Biosynthesis of the peptidoglycan of bacterial cell walls. 18. Purification and properties of L-alanyl transfer ribonucleic acid-uridine diphosphate-N-acetylmuramyl-pentapeptide transferase from Lactobacillus viridescens.</title>
        <authorList>
            <person name="Plapp R."/>
            <person name="Strominger J.L."/>
        </authorList>
    </citation>
    <scope>FUNCTION</scope>
    <scope>CATALYTIC ACTIVITY</scope>
</reference>
<reference key="3">
    <citation type="journal article" date="2003" name="J. Biol. Chem.">
        <title>Kinetic and mechanistic characterization of recombinant Lactobacillus viridescens FemX (UDP-N-acetylmuramoyl pentapeptide-lysine N6-alanyltransferase).</title>
        <authorList>
            <person name="Hegde S.S."/>
            <person name="Blanchard J.S."/>
        </authorList>
    </citation>
    <scope>FUNCTION</scope>
    <scope>BIOPHYSICOCHEMICAL PROPERTIES</scope>
    <scope>MUTAGENESIS OF ASP-109; GLU-205; GLU-215; GLU-316 AND GLU-320</scope>
</reference>
<reference key="4">
    <citation type="journal article" date="2004" name="Structure">
        <title>Crystal structures of Weissella viridescens FemX and its complex with UDP-MurNAc-pentapeptide: insights into FemABX family substrates recognition.</title>
        <authorList>
            <person name="Biarrotte-Sorin S."/>
            <person name="Maillard A.P."/>
            <person name="Delettre J."/>
            <person name="Sougakoff W."/>
            <person name="Arthur M."/>
            <person name="Mayer C."/>
        </authorList>
    </citation>
    <scope>X-RAY CRYSTALLOGRAPHY (1.70 ANGSTROMS) OF 2-336 IN COMPLEX WITH SUBSTRATE</scope>
</reference>
<reference key="5">
    <citation type="journal article" date="2005" name="J. Bacteriol.">
        <title>Structure-based site-directed mutagenesis of the UDP-MurNAc-pentapeptide-binding cavity of the FemX alanyl transferase from Weissella viridescens.</title>
        <authorList>
            <person name="Maillard A.P."/>
            <person name="Biarrotte-Sorin S."/>
            <person name="Villet R."/>
            <person name="Mesnage S."/>
            <person name="Bouhss A."/>
            <person name="Sougakoff W."/>
            <person name="Mayer C."/>
            <person name="Arthur M."/>
        </authorList>
    </citation>
    <scope>X-RAY CRYSTALLOGRAPHY (1.90 ANGSTROMS) OF 2-336</scope>
    <scope>FUNCTION</scope>
    <scope>BIOPHYSICOCHEMICAL PROPERTIES</scope>
    <scope>MUTAGENESIS OF LYS-37; ARG-212 AND TYR-216</scope>
</reference>
<reference key="6">
    <citation type="submission" date="2009-03" db="PDB data bank">
        <title>Structure of Weissella viridescens FemX with the UDP-MurNAc-hexapeptide product of the alanine transfer reaction.</title>
        <authorList>
            <person name="Delfosse V."/>
            <person name="Piton J."/>
            <person name="Villet R."/>
            <person name="Lecerf M."/>
            <person name="Arthur M."/>
            <person name="Mayer C."/>
        </authorList>
    </citation>
    <scope>X-RAY CRYSTALLOGRAPHY (1.60 ANGSTROMS)</scope>
</reference>
<reference key="7">
    <citation type="journal article" date="2013" name="Angew. Chem. Int. Ed.">
        <title>The structure of FemX(Wv) in complex with a peptidyl-RNA conjugate: mechanism of aminoacyl transfer from Ala-tRNA(Ala) to peptidoglycan precursors.</title>
        <authorList>
            <person name="Fonvielle M."/>
            <person name="Li de La Sierra-Gallay I."/>
            <person name="El-Sagheer A.H."/>
            <person name="Lecerf M."/>
            <person name="Patin D."/>
            <person name="Mellal D."/>
            <person name="Mayer C."/>
            <person name="Blanot D."/>
            <person name="Gale N."/>
            <person name="Brown T."/>
            <person name="van Tilbeurgh H."/>
            <person name="Etheve-Quelquejeu M."/>
            <person name="Arthur M."/>
        </authorList>
    </citation>
    <scope>X-RAY CRYSTALLOGRAPHY (1.66 ANGSTROMS)</scope>
    <scope>FUNCTION</scope>
    <scope>MUTAGENESIS OF LYS-37; ASN-39; TRP-40; PHE-71; TYR-104; HIS-140; HIS-207; ILE-209; THR-210; ARG-212; TYR-216; TYR-257; PHE-305 AND LYS-306</scope>
</reference>
<gene>
    <name evidence="7" type="primary">femX</name>
</gene>
<comment type="function">
    <text evidence="1 2 4 5 6">Involved in the synthesis of the bacterial cell wall. Catalyzes the addition of alanine into the interchain peptide bridge of peptidoglycan precursor using aminoacyl-tRNA(Ala) as amino acid donor. This alanine is added to the epsilon-amino group of the L-lysine of the peptidoglycan UDP-N-acetyl-alpha-D-muramoyl-L-alanyl-D-glutamyl-L-lysyl-D-alanyl-D-alanine, in a ribosome-independent mechanism (PubMed:11083873, PubMed:12679335, PubMed:15901708, PubMed:23744707, PubMed:4248527). Specific for UDP-N-acetyl-muramoyl-pentapeptide. Has no activity toward UDP-N-acetyl-muramoyl-tetrapeptide or UDP-N-acetyl-muramoyl-tripeptide (PubMed:15901708). Also acts on L-seryl-tRNA(Ser) (PubMed:4248527).</text>
</comment>
<comment type="catalytic activity">
    <reaction evidence="1 6">
        <text>UDP-N-acetyl-alpha-D-muramoyl-L-alanyl-gamma-D-glutamyl-L-lysyl-D-alanyl-D-alanine + L-alanyl-tRNA(Ala) = UDP-N-acetyl-alpha-D-muramoyl-L-alanyl-gamma-D-glutamyl-N(6)-(L-alanyl)-L-lysyl-D-alanyl-D-alanine + tRNA(Ala) + H(+)</text>
        <dbReference type="Rhea" id="RHEA:12432"/>
        <dbReference type="Rhea" id="RHEA-COMP:9657"/>
        <dbReference type="Rhea" id="RHEA-COMP:9923"/>
        <dbReference type="ChEBI" id="CHEBI:15378"/>
        <dbReference type="ChEBI" id="CHEBI:70758"/>
        <dbReference type="ChEBI" id="CHEBI:71358"/>
        <dbReference type="ChEBI" id="CHEBI:78442"/>
        <dbReference type="ChEBI" id="CHEBI:78497"/>
        <dbReference type="EC" id="2.3.2.10"/>
    </reaction>
</comment>
<comment type="biophysicochemical properties">
    <kinetics>
        <KM evidence="2">15 uM for tRNA(Ala)</KM>
        <KM evidence="4">1.7 uM for tRNA(Ala)</KM>
        <KM evidence="2">42 uM for UDP-N-acetyl-muramoyl-pentapeptide</KM>
        <KM evidence="4">79 uM for UDP-N-acetyl-muramoyl-pentapeptide</KM>
    </kinetics>
    <phDependence>
        <text evidence="2">Optimum pH is 7.0-8.0.</text>
    </phDependence>
</comment>
<comment type="similarity">
    <text evidence="9">Belongs to the FemABX family.</text>
</comment>
<name>FEMX_WEIVI</name>
<feature type="initiator methionine" description="Removed" evidence="1">
    <location>
        <position position="1"/>
    </location>
</feature>
<feature type="chain" id="PRO_0000430779" description="UDP-N-acetylmuramoylpentapeptide-lysine N(6)-alanyltransferase">
    <location>
        <begin position="2"/>
        <end position="336"/>
    </location>
</feature>
<feature type="binding site" evidence="3">
    <location>
        <begin position="37"/>
        <end position="40"/>
    </location>
    <ligand>
        <name>substrate</name>
    </ligand>
</feature>
<feature type="binding site" evidence="3">
    <location>
        <position position="104"/>
    </location>
    <ligand>
        <name>substrate</name>
    </ligand>
</feature>
<feature type="binding site" evidence="3">
    <location>
        <position position="212"/>
    </location>
    <ligand>
        <name>substrate</name>
    </ligand>
</feature>
<feature type="binding site" evidence="3">
    <location>
        <position position="216"/>
    </location>
    <ligand>
        <name>substrate</name>
    </ligand>
</feature>
<feature type="binding site" evidence="3">
    <location>
        <position position="257"/>
    </location>
    <ligand>
        <name>substrate</name>
    </ligand>
</feature>
<feature type="site" description="Important for catalytic activity" evidence="8">
    <location>
        <position position="109"/>
    </location>
</feature>
<feature type="site" description="Important for catalytic activity" evidence="8">
    <location>
        <position position="320"/>
    </location>
</feature>
<feature type="mutagenesis site" description="Loss of activity." evidence="1">
    <original>Q</original>
    <variation>E</variation>
    <location>
        <position position="29"/>
    </location>
</feature>
<feature type="mutagenesis site" description="Loss of activity." evidence="1">
    <original>Q</original>
    <variation>T</variation>
    <location>
        <position position="29"/>
    </location>
</feature>
<feature type="mutagenesis site" description="Loss of activity." evidence="4 5">
    <original>K</original>
    <variation>M</variation>
    <location>
        <position position="37"/>
    </location>
</feature>
<feature type="mutagenesis site" description="Reduces activity 150-fold." evidence="4">
    <original>K</original>
    <variation>R</variation>
    <location>
        <position position="37"/>
    </location>
</feature>
<feature type="mutagenesis site" description="Reduces activity 200-fold." evidence="5">
    <original>K</original>
    <variation>R</variation>
    <location>
        <position position="37"/>
    </location>
</feature>
<feature type="mutagenesis site" description="No effect on activity." evidence="5">
    <original>N</original>
    <variation>L</variation>
    <location>
        <position position="39"/>
    </location>
</feature>
<feature type="mutagenesis site" description="Reduces activity 2-fold." evidence="5">
    <original>W</original>
    <variation>F</variation>
    <location>
        <position position="40"/>
    </location>
</feature>
<feature type="mutagenesis site" description="Reduces activity 2-fold." evidence="5">
    <original>F</original>
    <variation>L</variation>
    <location>
        <position position="71"/>
    </location>
</feature>
<feature type="mutagenesis site" description="Reduces activity 2.5-fold." evidence="1">
    <original>Y</original>
    <variation>F</variation>
    <location>
        <position position="73"/>
    </location>
</feature>
<feature type="mutagenesis site" description="Reduces activity 2.5-fold." evidence="1">
    <original>Y</original>
    <variation>L</variation>
    <location>
        <position position="73"/>
    </location>
</feature>
<feature type="mutagenesis site" description="No effect on activity." evidence="5">
    <original>Y</original>
    <variation>F</variation>
    <location>
        <position position="104"/>
    </location>
</feature>
<feature type="mutagenesis site" description="Reduces activity 200-fold." evidence="2">
    <original>D</original>
    <variation>N</variation>
    <location>
        <position position="109"/>
    </location>
</feature>
<feature type="mutagenesis site" description="Loss of activity." evidence="1">
    <original>P</original>
    <variation>F</variation>
    <location>
        <position position="110"/>
    </location>
</feature>
<feature type="mutagenesis site" description="Loss of activity." evidence="1">
    <original>P</original>
    <variation>H</variation>
    <location>
        <position position="110"/>
    </location>
</feature>
<feature type="mutagenesis site" description="Reduces activity 5-fold." evidence="5">
    <original>H</original>
    <variation>A</variation>
    <location>
        <position position="140"/>
    </location>
</feature>
<feature type="mutagenesis site" description="Reduces activity 9-fold." evidence="1">
    <original>Q</original>
    <variation>E</variation>
    <location>
        <position position="144"/>
    </location>
</feature>
<feature type="mutagenesis site" description="Slightly reduces activity." evidence="1">
    <original>Q</original>
    <variation>T</variation>
    <location>
        <position position="144"/>
    </location>
</feature>
<feature type="mutagenesis site" description="Reduces activity 4-fold." evidence="1">
    <original>F</original>
    <variation>L</variation>
    <location>
        <position position="196"/>
    </location>
</feature>
<feature type="mutagenesis site" description="Slightly reduces activity." evidence="1">
    <original>F</original>
    <variation>Y</variation>
    <location>
        <position position="196"/>
    </location>
</feature>
<feature type="mutagenesis site" description="No effect on activity." evidence="2">
    <original>E</original>
    <variation>Q</variation>
    <location>
        <position position="205"/>
    </location>
</feature>
<feature type="mutagenesis site" description="Reduces activity 11-fold." evidence="5">
    <original>H</original>
    <variation>A</variation>
    <location>
        <position position="207"/>
    </location>
</feature>
<feature type="mutagenesis site" description="Reduces activity 50-fold." evidence="5">
    <original>I</original>
    <variation>A</variation>
    <location>
        <position position="209"/>
    </location>
</feature>
<feature type="mutagenesis site" description="Reduces activity 2-fold." evidence="5">
    <original>T</original>
    <variation>A</variation>
    <location>
        <position position="210"/>
    </location>
</feature>
<feature type="mutagenesis site" description="Loss of activity." evidence="4">
    <original>R</original>
    <variation>K</variation>
    <location>
        <position position="212"/>
    </location>
</feature>
<feature type="mutagenesis site" description="Loss of activity." evidence="4 5">
    <original>R</original>
    <variation>M</variation>
    <location>
        <position position="212"/>
    </location>
</feature>
<feature type="mutagenesis site" description="No effect on activity." evidence="2">
    <original>E</original>
    <variation>Q</variation>
    <location>
        <position position="215"/>
    </location>
</feature>
<feature type="mutagenesis site" description="Reduced activity." evidence="1 4">
    <original>Y</original>
    <variation>F</variation>
    <location>
        <position position="216"/>
    </location>
</feature>
<feature type="mutagenesis site" description="Reduces activity 25-fold." evidence="5">
    <original>Y</original>
    <variation>F</variation>
    <location>
        <position position="216"/>
    </location>
</feature>
<feature type="mutagenesis site" description="Loss of activity." evidence="1">
    <original>Y</original>
    <variation>L</variation>
    <location>
        <position position="216"/>
    </location>
</feature>
<feature type="mutagenesis site" description="Reduces activity 2-fold." evidence="5">
    <original>Y</original>
    <variation>F</variation>
    <location>
        <position position="257"/>
    </location>
</feature>
<feature type="mutagenesis site" description="Loss of activity." evidence="1">
    <original>G</original>
    <variation>V</variation>
    <location>
        <position position="292"/>
    </location>
</feature>
<feature type="mutagenesis site" description="Reduces activity 17-fold." evidence="5">
    <original>F</original>
    <variation>A</variation>
    <location>
        <position position="305"/>
    </location>
</feature>
<feature type="mutagenesis site" description="Reduces activity 33-fold." evidence="5">
    <original>F</original>
    <variation>L</variation>
    <location>
        <position position="305"/>
    </location>
</feature>
<feature type="mutagenesis site" description="Reduces activity 6-fold." evidence="1">
    <original>F</original>
    <variation>L</variation>
    <location>
        <position position="305"/>
    </location>
</feature>
<feature type="mutagenesis site" description="No effect on activity." evidence="1">
    <original>F</original>
    <variation>Y</variation>
    <location>
        <position position="305"/>
    </location>
</feature>
<feature type="mutagenesis site" description="Loss of activity." evidence="5">
    <original>K</original>
    <variation>A</variation>
    <location>
        <position position="306"/>
    </location>
</feature>
<feature type="mutagenesis site" description="Reduces activity 12-fold." evidence="1">
    <original>K</original>
    <variation>A</variation>
    <location>
        <position position="306"/>
    </location>
</feature>
<feature type="mutagenesis site" description="Reduces activity 2.5-fold." evidence="1">
    <original>K</original>
    <variation>C</variation>
    <location>
        <position position="306"/>
    </location>
</feature>
<feature type="mutagenesis site" description="Reduces activity 200-fold." evidence="5">
    <original>K</original>
    <variation>M</variation>
    <location>
        <position position="306"/>
    </location>
</feature>
<feature type="mutagenesis site" description="Reduces activity 11-fold." evidence="1">
    <original>K</original>
    <variation>N</variation>
    <location>
        <position position="306"/>
    </location>
</feature>
<feature type="mutagenesis site" description="Loss of activity." evidence="5">
    <original>K</original>
    <variation>R</variation>
    <location>
        <position position="306"/>
    </location>
</feature>
<feature type="mutagenesis site" description="Reduces activity 3-fold." evidence="2">
    <original>E</original>
    <variation>Q</variation>
    <location>
        <position position="316"/>
    </location>
</feature>
<feature type="mutagenesis site" description="Reduces activity 8-fold." evidence="1">
    <original>G</original>
    <variation>S</variation>
    <location>
        <position position="319"/>
    </location>
</feature>
<feature type="mutagenesis site" description="Reduces activity 20-fold." evidence="1">
    <original>G</original>
    <variation>V</variation>
    <location>
        <position position="319"/>
    </location>
</feature>
<feature type="mutagenesis site" description="Reduces activity 25-fold." evidence="2">
    <original>E</original>
    <variation>Q</variation>
    <location>
        <position position="320"/>
    </location>
</feature>
<feature type="helix" evidence="11">
    <location>
        <begin position="9"/>
        <end position="21"/>
    </location>
</feature>
<feature type="helix" evidence="11">
    <location>
        <begin position="27"/>
        <end position="29"/>
    </location>
</feature>
<feature type="helix" evidence="11">
    <location>
        <begin position="32"/>
        <end position="36"/>
    </location>
</feature>
<feature type="turn" evidence="11">
    <location>
        <begin position="37"/>
        <end position="39"/>
    </location>
</feature>
<feature type="strand" evidence="11">
    <location>
        <begin position="40"/>
        <end position="48"/>
    </location>
</feature>
<feature type="strand" evidence="11">
    <location>
        <begin position="54"/>
        <end position="63"/>
    </location>
</feature>
<feature type="strand" evidence="11">
    <location>
        <begin position="66"/>
        <end position="74"/>
    </location>
</feature>
<feature type="helix" evidence="11">
    <location>
        <begin position="85"/>
        <end position="99"/>
    </location>
</feature>
<feature type="strand" evidence="11">
    <location>
        <begin position="103"/>
        <end position="108"/>
    </location>
</feature>
<feature type="helix" evidence="11">
    <location>
        <begin position="116"/>
        <end position="124"/>
    </location>
</feature>
<feature type="strand" evidence="11">
    <location>
        <begin position="128"/>
        <end position="131"/>
    </location>
</feature>
<feature type="helix" evidence="11">
    <location>
        <begin position="132"/>
        <end position="137"/>
    </location>
</feature>
<feature type="helix" evidence="11">
    <location>
        <begin position="139"/>
        <end position="141"/>
    </location>
</feature>
<feature type="strand" evidence="11">
    <location>
        <begin position="142"/>
        <end position="144"/>
    </location>
</feature>
<feature type="strand" evidence="11">
    <location>
        <begin position="146"/>
        <end position="152"/>
    </location>
</feature>
<feature type="helix" evidence="11">
    <location>
        <begin position="153"/>
        <end position="155"/>
    </location>
</feature>
<feature type="helix" evidence="11">
    <location>
        <begin position="162"/>
        <end position="165"/>
    </location>
</feature>
<feature type="helix" evidence="11">
    <location>
        <begin position="168"/>
        <end position="179"/>
    </location>
</feature>
<feature type="strand" evidence="11">
    <location>
        <begin position="182"/>
        <end position="187"/>
    </location>
</feature>
<feature type="helix" evidence="11">
    <location>
        <begin position="190"/>
        <end position="207"/>
    </location>
</feature>
<feature type="helix" evidence="11">
    <location>
        <begin position="214"/>
        <end position="223"/>
    </location>
</feature>
<feature type="turn" evidence="11">
    <location>
        <begin position="226"/>
        <end position="228"/>
    </location>
</feature>
<feature type="strand" evidence="11">
    <location>
        <begin position="229"/>
        <end position="236"/>
    </location>
</feature>
<feature type="strand" evidence="11">
    <location>
        <begin position="239"/>
        <end position="249"/>
    </location>
</feature>
<feature type="strand" evidence="11">
    <location>
        <begin position="252"/>
        <end position="260"/>
    </location>
</feature>
<feature type="helix" evidence="11">
    <location>
        <begin position="268"/>
        <end position="282"/>
    </location>
</feature>
<feature type="strand" evidence="11">
    <location>
        <begin position="286"/>
        <end position="294"/>
    </location>
</feature>
<feature type="helix" evidence="11">
    <location>
        <begin position="301"/>
        <end position="307"/>
    </location>
</feature>
<feature type="strand" evidence="11">
    <location>
        <begin position="315"/>
        <end position="317"/>
    </location>
</feature>
<feature type="strand" evidence="11">
    <location>
        <begin position="320"/>
        <end position="325"/>
    </location>
</feature>
<feature type="helix" evidence="11">
    <location>
        <begin position="327"/>
        <end position="333"/>
    </location>
</feature>
<evidence type="ECO:0000269" key="1">
    <source>
    </source>
</evidence>
<evidence type="ECO:0000269" key="2">
    <source>
    </source>
</evidence>
<evidence type="ECO:0000269" key="3">
    <source>
    </source>
</evidence>
<evidence type="ECO:0000269" key="4">
    <source>
    </source>
</evidence>
<evidence type="ECO:0000269" key="5">
    <source>
    </source>
</evidence>
<evidence type="ECO:0000269" key="6">
    <source>
    </source>
</evidence>
<evidence type="ECO:0000303" key="7">
    <source>
    </source>
</evidence>
<evidence type="ECO:0000303" key="8">
    <source>
    </source>
</evidence>
<evidence type="ECO:0000305" key="9"/>
<evidence type="ECO:0000312" key="10">
    <source>
        <dbReference type="EMBL" id="AAG21689.1"/>
    </source>
</evidence>
<evidence type="ECO:0007829" key="11">
    <source>
        <dbReference type="PDB" id="7Z5Z"/>
    </source>
</evidence>